<reference key="1">
    <citation type="journal article" date="2010" name="Br. Poult. Sci.">
        <title>Proton-coupled folate transporter (PCFT): molecular cloning, tissue expression patterns and the effects of dietary folate supplementation on mRNA expression in laying hens.</title>
        <authorList>
            <person name="Jing M."/>
            <person name="Tactacan G.B."/>
            <person name="Rodriguez-Lecompte J.C."/>
            <person name="Kroeker A."/>
            <person name="House J.D."/>
        </authorList>
    </citation>
    <scope>NUCLEOTIDE SEQUENCE [MRNA]</scope>
    <scope>TISSUE SPECIFICITY</scope>
</reference>
<reference key="2">
    <citation type="journal article" date="2004" name="Nature">
        <title>Sequence and comparative analysis of the chicken genome provide unique perspectives on vertebrate evolution.</title>
        <authorList>
            <person name="Hillier L.W."/>
            <person name="Miller W."/>
            <person name="Birney E."/>
            <person name="Warren W."/>
            <person name="Hardison R.C."/>
            <person name="Ponting C.P."/>
            <person name="Bork P."/>
            <person name="Burt D.W."/>
            <person name="Groenen M.A.M."/>
            <person name="Delany M.E."/>
            <person name="Dodgson J.B."/>
            <person name="Chinwalla A.T."/>
            <person name="Cliften P.F."/>
            <person name="Clifton S.W."/>
            <person name="Delehaunty K.D."/>
            <person name="Fronick C."/>
            <person name="Fulton R.S."/>
            <person name="Graves T.A."/>
            <person name="Kremitzki C."/>
            <person name="Layman D."/>
            <person name="Magrini V."/>
            <person name="McPherson J.D."/>
            <person name="Miner T.L."/>
            <person name="Minx P."/>
            <person name="Nash W.E."/>
            <person name="Nhan M.N."/>
            <person name="Nelson J.O."/>
            <person name="Oddy L.G."/>
            <person name="Pohl C.S."/>
            <person name="Randall-Maher J."/>
            <person name="Smith S.M."/>
            <person name="Wallis J.W."/>
            <person name="Yang S.-P."/>
            <person name="Romanov M.N."/>
            <person name="Rondelli C.M."/>
            <person name="Paton B."/>
            <person name="Smith J."/>
            <person name="Morrice D."/>
            <person name="Daniels L."/>
            <person name="Tempest H.G."/>
            <person name="Robertson L."/>
            <person name="Masabanda J.S."/>
            <person name="Griffin D.K."/>
            <person name="Vignal A."/>
            <person name="Fillon V."/>
            <person name="Jacobbson L."/>
            <person name="Kerje S."/>
            <person name="Andersson L."/>
            <person name="Crooijmans R.P."/>
            <person name="Aerts J."/>
            <person name="van der Poel J.J."/>
            <person name="Ellegren H."/>
            <person name="Caldwell R.B."/>
            <person name="Hubbard S.J."/>
            <person name="Grafham D.V."/>
            <person name="Kierzek A.M."/>
            <person name="McLaren S.R."/>
            <person name="Overton I.M."/>
            <person name="Arakawa H."/>
            <person name="Beattie K.J."/>
            <person name="Bezzubov Y."/>
            <person name="Boardman P.E."/>
            <person name="Bonfield J.K."/>
            <person name="Croning M.D.R."/>
            <person name="Davies R.M."/>
            <person name="Francis M.D."/>
            <person name="Humphray S.J."/>
            <person name="Scott C.E."/>
            <person name="Taylor R.G."/>
            <person name="Tickle C."/>
            <person name="Brown W.R.A."/>
            <person name="Rogers J."/>
            <person name="Buerstedde J.-M."/>
            <person name="Wilson S.A."/>
            <person name="Stubbs L."/>
            <person name="Ovcharenko I."/>
            <person name="Gordon L."/>
            <person name="Lucas S."/>
            <person name="Miller M.M."/>
            <person name="Inoko H."/>
            <person name="Shiina T."/>
            <person name="Kaufman J."/>
            <person name="Salomonsen J."/>
            <person name="Skjoedt K."/>
            <person name="Wong G.K.-S."/>
            <person name="Wang J."/>
            <person name="Liu B."/>
            <person name="Wang J."/>
            <person name="Yu J."/>
            <person name="Yang H."/>
            <person name="Nefedov M."/>
            <person name="Koriabine M."/>
            <person name="Dejong P.J."/>
            <person name="Goodstadt L."/>
            <person name="Webber C."/>
            <person name="Dickens N.J."/>
            <person name="Letunic I."/>
            <person name="Suyama M."/>
            <person name="Torrents D."/>
            <person name="von Mering C."/>
            <person name="Zdobnov E.M."/>
            <person name="Makova K."/>
            <person name="Nekrutenko A."/>
            <person name="Elnitski L."/>
            <person name="Eswara P."/>
            <person name="King D.C."/>
            <person name="Yang S.-P."/>
            <person name="Tyekucheva S."/>
            <person name="Radakrishnan A."/>
            <person name="Harris R.S."/>
            <person name="Chiaromonte F."/>
            <person name="Taylor J."/>
            <person name="He J."/>
            <person name="Rijnkels M."/>
            <person name="Griffiths-Jones S."/>
            <person name="Ureta-Vidal A."/>
            <person name="Hoffman M.M."/>
            <person name="Severin J."/>
            <person name="Searle S.M.J."/>
            <person name="Law A.S."/>
            <person name="Speed D."/>
            <person name="Waddington D."/>
            <person name="Cheng Z."/>
            <person name="Tuzun E."/>
            <person name="Eichler E."/>
            <person name="Bao Z."/>
            <person name="Flicek P."/>
            <person name="Shteynberg D.D."/>
            <person name="Brent M.R."/>
            <person name="Bye J.M."/>
            <person name="Huckle E.J."/>
            <person name="Chatterji S."/>
            <person name="Dewey C."/>
            <person name="Pachter L."/>
            <person name="Kouranov A."/>
            <person name="Mourelatos Z."/>
            <person name="Hatzigeorgiou A.G."/>
            <person name="Paterson A.H."/>
            <person name="Ivarie R."/>
            <person name="Brandstrom M."/>
            <person name="Axelsson E."/>
            <person name="Backstrom N."/>
            <person name="Berlin S."/>
            <person name="Webster M.T."/>
            <person name="Pourquie O."/>
            <person name="Reymond A."/>
            <person name="Ucla C."/>
            <person name="Antonarakis S.E."/>
            <person name="Long M."/>
            <person name="Emerson J.J."/>
            <person name="Betran E."/>
            <person name="Dupanloup I."/>
            <person name="Kaessmann H."/>
            <person name="Hinrichs A.S."/>
            <person name="Bejerano G."/>
            <person name="Furey T.S."/>
            <person name="Harte R.A."/>
            <person name="Raney B."/>
            <person name="Siepel A."/>
            <person name="Kent W.J."/>
            <person name="Haussler D."/>
            <person name="Eyras E."/>
            <person name="Castelo R."/>
            <person name="Abril J.F."/>
            <person name="Castellano S."/>
            <person name="Camara F."/>
            <person name="Parra G."/>
            <person name="Guigo R."/>
            <person name="Bourque G."/>
            <person name="Tesler G."/>
            <person name="Pevzner P.A."/>
            <person name="Smit A."/>
            <person name="Fulton L.A."/>
            <person name="Mardis E.R."/>
            <person name="Wilson R.K."/>
        </authorList>
    </citation>
    <scope>NUCLEOTIDE SEQUENCE [LARGE SCALE GENOMIC DNA]</scope>
    <source>
        <strain>Red jungle fowl</strain>
    </source>
</reference>
<reference evidence="11 12" key="3">
    <citation type="journal article" date="2021" name="Nature">
        <title>Structural basis of antifolate recognition and transport by PCFT.</title>
        <authorList>
            <person name="Parker J.L."/>
            <person name="Deme J.C."/>
            <person name="Kuteyi G."/>
            <person name="Wu Z."/>
            <person name="Huo J."/>
            <person name="Goldman I.D."/>
            <person name="Owens R.J."/>
            <person name="Biggin P.C."/>
            <person name="Lea S.M."/>
            <person name="Newstead S."/>
        </authorList>
    </citation>
    <scope>STRUCTURE BY ELECTRON MICROSCOPY (3.20 ANGSTROMS)</scope>
    <scope>DISULFIDE BONDS</scope>
    <scope>FUNCTION</scope>
    <scope>TRANSPORTER ACTIVITY</scope>
    <scope>BIOPHYSICOCHEMICAL PROPERTIES</scope>
    <scope>SUBUNIT</scope>
    <scope>MUTAGENESIS OF ASP-164 AND GLU-193</scope>
</reference>
<comment type="function">
    <text evidence="2 7">Proton-coupled folate symporter that mediates folate absorption using an H(+) gradient as a driving force (PubMed:34040256). Involved in the intestinal absorption of folates at the brush-border membrane of the proximal jejunum, and the transport from blood to cerebrospinal fluid across the choroid plexus (PubMed:34040256). Functions at acidic pH via alternate outward- and inward-open conformation states (PubMed:34040256). Protonation of residues in the outward open state primes the protein for transport (PubMed:34040256). Binding of folate promotes breaking of salt bridge network and subsequent closure of the extracellular gate, leading to the inward-open state and release of protons and folate (PubMed:34040256). Also able to transport antifolate drugs, such as methotrexate and pemetrexed (PubMed:34040256). Also acts as a lower-affinity, pH-independent heme carrier protein and constitutes the main importer of heme in the intestine (By similarity). Imports heme in the retina and retinal pigment epithelium, in neurons of the hippocampus, in hepatocytes and in the renal epithelial cells (By similarity).</text>
</comment>
<comment type="catalytic activity">
    <reaction evidence="10">
        <text>folate(in) + H(+)(in) = folate(out) + H(+)(out)</text>
        <dbReference type="Rhea" id="RHEA:70159"/>
        <dbReference type="ChEBI" id="CHEBI:15378"/>
        <dbReference type="ChEBI" id="CHEBI:62501"/>
    </reaction>
</comment>
<comment type="catalytic activity">
    <reaction evidence="1">
        <text>(6S)-5-methyl-5,6,7,8-tetrahydrofolate(in) + H(+)(in) = (6S)-5-methyl-5,6,7,8-tetrahydrofolate(out) + H(+)(out)</text>
        <dbReference type="Rhea" id="RHEA:70167"/>
        <dbReference type="ChEBI" id="CHEBI:15378"/>
        <dbReference type="ChEBI" id="CHEBI:18608"/>
    </reaction>
</comment>
<comment type="catalytic activity">
    <reaction evidence="2">
        <text>methotrexate(in) + H(+)(in) = methotrexate(out) + H(+)(out)</text>
        <dbReference type="Rhea" id="RHEA:70163"/>
        <dbReference type="ChEBI" id="CHEBI:15378"/>
        <dbReference type="ChEBI" id="CHEBI:50681"/>
    </reaction>
</comment>
<comment type="catalytic activity">
    <reaction evidence="2">
        <text>pemetrexed(in) + H(+)(in) = pemetrexed(out) + H(+)(out)</text>
        <dbReference type="Rhea" id="RHEA:70171"/>
        <dbReference type="ChEBI" id="CHEBI:15378"/>
        <dbReference type="ChEBI" id="CHEBI:63724"/>
    </reaction>
</comment>
<comment type="biophysicochemical properties">
    <kinetics>
        <KM evidence="7">2 uM for folic acid</KM>
    </kinetics>
    <phDependence>
        <text evidence="7">Optimum pH is 5.0-5.5.</text>
    </phDependence>
</comment>
<comment type="subunit">
    <text evidence="7">Monomer.</text>
</comment>
<comment type="subcellular location">
    <subcellularLocation>
        <location evidence="2">Cell membrane</location>
        <topology evidence="7">Multi-pass membrane protein</topology>
    </subcellularLocation>
    <subcellularLocation>
        <location evidence="2">Apical cell membrane</location>
        <topology evidence="7">Multi-pass membrane protein</topology>
    </subcellularLocation>
    <subcellularLocation>
        <location evidence="2">Basolateral cell membrane</location>
        <topology evidence="3">Multi-pass membrane protein</topology>
    </subcellularLocation>
    <subcellularLocation>
        <location evidence="2">Endosome membrane</location>
        <topology evidence="3">Multi-pass membrane protein</topology>
    </subcellularLocation>
    <subcellularLocation>
        <location evidence="1">Cytoplasm</location>
    </subcellularLocation>
    <text evidence="1">Localizes to the apical membrane of intestinal cells in iron-deficient cells, while it resides in the cytoplasm in iron-replete cells (By similarity). Localizes to the basolateral membrane of choroid plexus (By similarity).</text>
</comment>
<comment type="tissue specificity">
    <text evidence="6">Widely expressed, including brain, aorta, liver, kidney, spleen, small intestine, pancreas, ovary and testis.</text>
</comment>
<comment type="similarity">
    <text evidence="9">Belongs to the major facilitator superfamily. SLC46A family.</text>
</comment>
<name>PCFT_CHICK</name>
<evidence type="ECO:0000250" key="1">
    <source>
        <dbReference type="UniProtKB" id="Q6PEM8"/>
    </source>
</evidence>
<evidence type="ECO:0000250" key="2">
    <source>
        <dbReference type="UniProtKB" id="Q96NT5"/>
    </source>
</evidence>
<evidence type="ECO:0000255" key="3"/>
<evidence type="ECO:0000255" key="4">
    <source>
        <dbReference type="PROSITE-ProRule" id="PRU00498"/>
    </source>
</evidence>
<evidence type="ECO:0000256" key="5">
    <source>
        <dbReference type="SAM" id="MobiDB-lite"/>
    </source>
</evidence>
<evidence type="ECO:0000269" key="6">
    <source>
    </source>
</evidence>
<evidence type="ECO:0000269" key="7">
    <source>
    </source>
</evidence>
<evidence type="ECO:0000303" key="8">
    <source>
    </source>
</evidence>
<evidence type="ECO:0000305" key="9"/>
<evidence type="ECO:0000305" key="10">
    <source>
    </source>
</evidence>
<evidence type="ECO:0007744" key="11">
    <source>
        <dbReference type="PDB" id="7BC6"/>
    </source>
</evidence>
<evidence type="ECO:0007744" key="12">
    <source>
        <dbReference type="PDB" id="7BC7"/>
    </source>
</evidence>
<evidence type="ECO:0007829" key="13">
    <source>
        <dbReference type="PDB" id="7BC6"/>
    </source>
</evidence>
<evidence type="ECO:0007829" key="14">
    <source>
        <dbReference type="PDB" id="7BC7"/>
    </source>
</evidence>
<feature type="chain" id="PRO_0000455380" description="Proton-coupled folate transporter">
    <location>
        <begin position="1"/>
        <end position="473"/>
    </location>
</feature>
<feature type="topological domain" description="Cytoplasmic" evidence="7 11 12">
    <location>
        <begin position="1"/>
        <end position="29"/>
    </location>
</feature>
<feature type="transmembrane region" description="Helical; Name=TM1" evidence="7 11 12">
    <location>
        <begin position="30"/>
        <end position="48"/>
    </location>
</feature>
<feature type="topological domain" description="Extracellular" evidence="7 11 12">
    <location>
        <begin position="49"/>
        <end position="90"/>
    </location>
</feature>
<feature type="transmembrane region" description="Helical; Name=TM2" evidence="7 11 12">
    <location>
        <begin position="91"/>
        <end position="116"/>
    </location>
</feature>
<feature type="topological domain" description="Cytoplasmic" evidence="7 11 12">
    <location>
        <begin position="117"/>
        <end position="120"/>
    </location>
</feature>
<feature type="transmembrane region" description="Helical; Name=TM3" evidence="7 11 12">
    <location>
        <begin position="121"/>
        <end position="143"/>
    </location>
</feature>
<feature type="topological domain" description="Extracellular" evidence="7 11 12">
    <location>
        <begin position="144"/>
        <end position="148"/>
    </location>
</feature>
<feature type="transmembrane region" description="Helical; Name=TM4" evidence="7 11 12">
    <location>
        <begin position="149"/>
        <end position="162"/>
    </location>
</feature>
<feature type="topological domain" description="Cytoplasmic" evidence="7 11 12">
    <location>
        <begin position="163"/>
        <end position="185"/>
    </location>
</feature>
<feature type="transmembrane region" description="Helical; Name=TM5" evidence="7 11 12">
    <location>
        <begin position="186"/>
        <end position="211"/>
    </location>
</feature>
<feature type="topological domain" description="Extracellular" evidence="7 11 12">
    <location>
        <begin position="212"/>
        <end position="216"/>
    </location>
</feature>
<feature type="transmembrane region" description="Helical; Name=TM6" evidence="7 11 12">
    <location>
        <begin position="217"/>
        <end position="235"/>
    </location>
</feature>
<feature type="topological domain" description="Cytoplasmic" evidence="7 11 12">
    <location>
        <begin position="236"/>
        <end position="274"/>
    </location>
</feature>
<feature type="transmembrane region" description="Helical; Name=TM7" evidence="7 11 12">
    <location>
        <begin position="275"/>
        <end position="297"/>
    </location>
</feature>
<feature type="topological domain" description="Extracellular" evidence="7 11 12">
    <location>
        <begin position="298"/>
        <end position="310"/>
    </location>
</feature>
<feature type="transmembrane region" description="Helical; Name=TM8" evidence="7 11 12">
    <location>
        <begin position="311"/>
        <end position="333"/>
    </location>
</feature>
<feature type="topological domain" description="Cytoplasmic" evidence="7 11 12">
    <location>
        <begin position="334"/>
        <end position="339"/>
    </location>
</feature>
<feature type="transmembrane region" description="Helical; Name=TM9" evidence="7 11 12">
    <location>
        <begin position="340"/>
        <end position="359"/>
    </location>
</feature>
<feature type="topological domain" description="Extracellular" evidence="7 11 12">
    <location>
        <begin position="360"/>
        <end position="363"/>
    </location>
</feature>
<feature type="transmembrane region" description="Helical; Name=TM10" evidence="7 11 12">
    <location>
        <begin position="364"/>
        <end position="384"/>
    </location>
</feature>
<feature type="topological domain" description="Cytoplasmic" evidence="7 11 12">
    <location>
        <begin position="385"/>
        <end position="396"/>
    </location>
</feature>
<feature type="transmembrane region" description="Helical; Name=TM11" evidence="7 11 12">
    <location>
        <begin position="397"/>
        <end position="422"/>
    </location>
</feature>
<feature type="topological domain" description="Extracellular" evidence="7 11 12">
    <location>
        <begin position="423"/>
        <end position="430"/>
    </location>
</feature>
<feature type="transmembrane region" description="Helical; Name=TM12" evidence="7 11 12">
    <location>
        <begin position="431"/>
        <end position="449"/>
    </location>
</feature>
<feature type="topological domain" description="Cytoplasmic" evidence="7 11 12">
    <location>
        <begin position="450"/>
        <end position="473"/>
    </location>
</feature>
<feature type="region of interest" description="Disordered" evidence="5">
    <location>
        <begin position="1"/>
        <end position="21"/>
    </location>
</feature>
<feature type="compositionally biased region" description="Pro residues" evidence="5">
    <location>
        <begin position="1"/>
        <end position="20"/>
    </location>
</feature>
<feature type="binding site" evidence="7 12">
    <location>
        <position position="98"/>
    </location>
    <ligand>
        <name>pemetrexed</name>
        <dbReference type="ChEBI" id="CHEBI:63724"/>
    </ligand>
</feature>
<feature type="binding site" description="reversibly protonated residue during proton transport" evidence="7">
    <location>
        <position position="164"/>
    </location>
    <ligand>
        <name>H(+)</name>
        <dbReference type="ChEBI" id="CHEBI:15378"/>
    </ligand>
</feature>
<feature type="binding site" description="reversibly protonated residue during proton transport" evidence="7">
    <location>
        <position position="193"/>
    </location>
    <ligand>
        <name>H(+)</name>
        <dbReference type="ChEBI" id="CHEBI:15378"/>
    </ligand>
</feature>
<feature type="binding site" evidence="7 12">
    <location>
        <position position="193"/>
    </location>
    <ligand>
        <name>pemetrexed</name>
        <dbReference type="ChEBI" id="CHEBI:63724"/>
    </ligand>
</feature>
<feature type="binding site" description="reversibly protonated residue during proton transport" evidence="2">
    <location>
        <position position="289"/>
    </location>
    <ligand>
        <name>H(+)</name>
        <dbReference type="ChEBI" id="CHEBI:15378"/>
    </ligand>
</feature>
<feature type="binding site" evidence="7 12">
    <location>
        <position position="323"/>
    </location>
    <ligand>
        <name>pemetrexed</name>
        <dbReference type="ChEBI" id="CHEBI:63724"/>
    </ligand>
</feature>
<feature type="binding site" evidence="7 12">
    <location>
        <position position="407"/>
    </location>
    <ligand>
        <name>pemetrexed</name>
        <dbReference type="ChEBI" id="CHEBI:63724"/>
    </ligand>
</feature>
<feature type="binding site" evidence="7 12">
    <location>
        <position position="411"/>
    </location>
    <ligand>
        <name>pemetrexed</name>
        <dbReference type="ChEBI" id="CHEBI:63724"/>
    </ligand>
</feature>
<feature type="glycosylation site" description="N-linked (GlcNAc...) asparagine" evidence="4">
    <location>
        <position position="65"/>
    </location>
</feature>
<feature type="glycosylation site" description="N-linked (GlcNAc...) asparagine" evidence="4">
    <location>
        <position position="74"/>
    </location>
</feature>
<feature type="disulfide bond" evidence="7 11 12">
    <location>
        <begin position="72"/>
        <end position="306"/>
    </location>
</feature>
<feature type="mutagenesis site" description="Strongly reduced proton-coupled folate transport." evidence="7">
    <original>D</original>
    <variation>N</variation>
    <location>
        <position position="164"/>
    </location>
</feature>
<feature type="mutagenesis site" description="Abolished proton-coupled folate transport." evidence="7">
    <original>E</original>
    <variation>A</variation>
    <location>
        <position position="193"/>
    </location>
</feature>
<feature type="mutagenesis site" description="Strong proton-coupled folate transport at pH 7.5." evidence="7">
    <original>E</original>
    <variation>N</variation>
    <location>
        <position position="193"/>
    </location>
</feature>
<feature type="sequence conflict" description="In Ref. 1; ACV70072." evidence="9" ref="1">
    <original>L</original>
    <variation>P</variation>
    <location>
        <position position="25"/>
    </location>
</feature>
<feature type="sequence conflict" description="In Ref. 1; ACV70072." evidence="9" ref="1">
    <original>G</original>
    <variation>S</variation>
    <location>
        <position position="392"/>
    </location>
</feature>
<feature type="helix" evidence="13">
    <location>
        <begin position="30"/>
        <end position="58"/>
    </location>
</feature>
<feature type="strand" evidence="14">
    <location>
        <begin position="71"/>
        <end position="73"/>
    </location>
</feature>
<feature type="helix" evidence="13">
    <location>
        <begin position="81"/>
        <end position="119"/>
    </location>
</feature>
<feature type="helix" evidence="13">
    <location>
        <begin position="122"/>
        <end position="145"/>
    </location>
</feature>
<feature type="helix" evidence="13">
    <location>
        <begin position="150"/>
        <end position="161"/>
    </location>
</feature>
<feature type="helix" evidence="13">
    <location>
        <begin position="165"/>
        <end position="177"/>
    </location>
</feature>
<feature type="turn" evidence="14">
    <location>
        <begin position="182"/>
        <end position="184"/>
    </location>
</feature>
<feature type="helix" evidence="13">
    <location>
        <begin position="185"/>
        <end position="206"/>
    </location>
</feature>
<feature type="helix" evidence="13">
    <location>
        <begin position="208"/>
        <end position="211"/>
    </location>
</feature>
<feature type="turn" evidence="13">
    <location>
        <begin position="212"/>
        <end position="217"/>
    </location>
</feature>
<feature type="helix" evidence="13">
    <location>
        <begin position="218"/>
        <end position="220"/>
    </location>
</feature>
<feature type="helix" evidence="13">
    <location>
        <begin position="221"/>
        <end position="237"/>
    </location>
</feature>
<feature type="strand" evidence="13">
    <location>
        <begin position="250"/>
        <end position="253"/>
    </location>
</feature>
<feature type="turn" evidence="13">
    <location>
        <begin position="254"/>
        <end position="256"/>
    </location>
</feature>
<feature type="helix" evidence="13">
    <location>
        <begin position="257"/>
        <end position="263"/>
    </location>
</feature>
<feature type="turn" evidence="13">
    <location>
        <begin position="268"/>
        <end position="270"/>
    </location>
</feature>
<feature type="helix" evidence="13">
    <location>
        <begin position="273"/>
        <end position="300"/>
    </location>
</feature>
<feature type="strand" evidence="13">
    <location>
        <begin position="302"/>
        <end position="304"/>
    </location>
</feature>
<feature type="helix" evidence="13">
    <location>
        <begin position="309"/>
        <end position="333"/>
    </location>
</feature>
<feature type="turn" evidence="13">
    <location>
        <begin position="334"/>
        <end position="336"/>
    </location>
</feature>
<feature type="helix" evidence="13">
    <location>
        <begin position="341"/>
        <end position="358"/>
    </location>
</feature>
<feature type="helix" evidence="13">
    <location>
        <begin position="363"/>
        <end position="372"/>
    </location>
</feature>
<feature type="helix" evidence="13">
    <location>
        <begin position="376"/>
        <end position="378"/>
    </location>
</feature>
<feature type="helix" evidence="13">
    <location>
        <begin position="380"/>
        <end position="388"/>
    </location>
</feature>
<feature type="helix" evidence="13">
    <location>
        <begin position="396"/>
        <end position="424"/>
    </location>
</feature>
<feature type="helix" evidence="13">
    <location>
        <begin position="432"/>
        <end position="440"/>
    </location>
</feature>
<feature type="helix" evidence="13">
    <location>
        <begin position="442"/>
        <end position="456"/>
    </location>
</feature>
<protein>
    <recommendedName>
        <fullName evidence="8">Proton-coupled folate transporter</fullName>
    </recommendedName>
    <alternativeName>
        <fullName evidence="9">Solute carrier family 46 member 1</fullName>
    </alternativeName>
</protein>
<proteinExistence type="evidence at protein level"/>
<organism>
    <name type="scientific">Gallus gallus</name>
    <name type="common">Chicken</name>
    <dbReference type="NCBI Taxonomy" id="9031"/>
    <lineage>
        <taxon>Eukaryota</taxon>
        <taxon>Metazoa</taxon>
        <taxon>Chordata</taxon>
        <taxon>Craniata</taxon>
        <taxon>Vertebrata</taxon>
        <taxon>Euteleostomi</taxon>
        <taxon>Archelosauria</taxon>
        <taxon>Archosauria</taxon>
        <taxon>Dinosauria</taxon>
        <taxon>Saurischia</taxon>
        <taxon>Theropoda</taxon>
        <taxon>Coelurosauria</taxon>
        <taxon>Aves</taxon>
        <taxon>Neognathae</taxon>
        <taxon>Galloanserae</taxon>
        <taxon>Galliformes</taxon>
        <taxon>Phasianidae</taxon>
        <taxon>Phasianinae</taxon>
        <taxon>Gallus</taxon>
    </lineage>
</organism>
<accession>F1NJ67</accession>
<accession>E6Y8U5</accession>
<keyword id="KW-0002">3D-structure</keyword>
<keyword id="KW-1003">Cell membrane</keyword>
<keyword id="KW-0963">Cytoplasm</keyword>
<keyword id="KW-1015">Disulfide bond</keyword>
<keyword id="KW-0967">Endosome</keyword>
<keyword id="KW-0290">Folate-binding</keyword>
<keyword id="KW-0325">Glycoprotein</keyword>
<keyword id="KW-0472">Membrane</keyword>
<keyword id="KW-1185">Reference proteome</keyword>
<keyword id="KW-0769">Symport</keyword>
<keyword id="KW-0812">Transmembrane</keyword>
<keyword id="KW-1133">Transmembrane helix</keyword>
<keyword id="KW-0813">Transport</keyword>
<sequence length="473" mass="50465">MAAPSDPPTAATPPAPPPPARRCLLAPSVEPLLFLATLALGLQVPLATQYLWDRLGAERGYVGPNASSPHGCGNGSGAVDPLREEVEALVAHWNLCINLGGFFVGLFSVTLFGPWSDSVGRRPVLVLPAVGMAVQAAVYLLVMYLRLHVAYLLLGRIISGLLGDYNLILAGCFASVADSSNQRTRTFRVAILEACLGVAGMVASVGGGQWRKAEGYINPFWLVLAASLAAALYAALCLQETVKQRRAAKLLTLQHYKAVYKLYTAPEDLSSRRKLALYSLAFFLLVTVHFGTKDLYVLYELGSPLCWASDLIGYGSAASYLAYLSSLGGLRLLQLCLEDTWVAEIGLISNIAGLVVISLATTTPLMFTGYGIMFLSMAATPVIRAKLSKLVGETEQGALFASVACVEGLCSLVATGVFNSLYPSTLHFMRGFPFLFGAILLLIPAAIMGWIEIQDSNLQYSHFSDASSSPADG</sequence>
<dbReference type="EMBL" id="FJ655775">
    <property type="protein sequence ID" value="ACV70072.1"/>
    <property type="molecule type" value="mRNA"/>
</dbReference>
<dbReference type="EMBL" id="AADN05000057">
    <property type="status" value="NOT_ANNOTATED_CDS"/>
    <property type="molecule type" value="Genomic_DNA"/>
</dbReference>
<dbReference type="RefSeq" id="NP_001191995.1">
    <property type="nucleotide sequence ID" value="NM_001205066.1"/>
</dbReference>
<dbReference type="PDB" id="7BC6">
    <property type="method" value="EM"/>
    <property type="resolution" value="3.20 A"/>
    <property type="chains" value="A=1-473"/>
</dbReference>
<dbReference type="PDB" id="7BC7">
    <property type="method" value="EM"/>
    <property type="resolution" value="3.30 A"/>
    <property type="chains" value="A=1-473"/>
</dbReference>
<dbReference type="PDBsum" id="7BC6"/>
<dbReference type="PDBsum" id="7BC7"/>
<dbReference type="EMDB" id="EMD-12140"/>
<dbReference type="EMDB" id="EMD-12141"/>
<dbReference type="SMR" id="F1NJ67"/>
<dbReference type="FunCoup" id="F1NJ67">
    <property type="interactions" value="47"/>
</dbReference>
<dbReference type="STRING" id="9031.ENSGALP00000005695"/>
<dbReference type="GlyCosmos" id="F1NJ67">
    <property type="glycosylation" value="2 sites, No reported glycans"/>
</dbReference>
<dbReference type="GlyGen" id="F1NJ67">
    <property type="glycosylation" value="3 sites"/>
</dbReference>
<dbReference type="PaxDb" id="9031-ENSGALP00000005695"/>
<dbReference type="GeneID" id="417569"/>
<dbReference type="KEGG" id="gga:417569"/>
<dbReference type="CTD" id="113235"/>
<dbReference type="VEuPathDB" id="HostDB:geneid_417569"/>
<dbReference type="eggNOG" id="KOG2816">
    <property type="taxonomic scope" value="Eukaryota"/>
</dbReference>
<dbReference type="HOGENOM" id="CLU_028365_1_1_1"/>
<dbReference type="InParanoid" id="F1NJ67"/>
<dbReference type="OrthoDB" id="419734at2759"/>
<dbReference type="TreeFam" id="TF315701"/>
<dbReference type="Reactome" id="R-GGA-196757">
    <property type="pathway name" value="Metabolism of folate and pterines"/>
</dbReference>
<dbReference type="Reactome" id="R-GGA-917937">
    <property type="pathway name" value="Iron uptake and transport"/>
</dbReference>
<dbReference type="Reactome" id="R-GGA-9707616">
    <property type="pathway name" value="Heme signaling"/>
</dbReference>
<dbReference type="PRO" id="PR:F1NJ67"/>
<dbReference type="Proteomes" id="UP000000539">
    <property type="component" value="Chromosome 19"/>
</dbReference>
<dbReference type="Bgee" id="ENSGALG00000003604">
    <property type="expression patterns" value="Expressed in kidney and 12 other cell types or tissues"/>
</dbReference>
<dbReference type="GO" id="GO:0016324">
    <property type="term" value="C:apical plasma membrane"/>
    <property type="evidence" value="ECO:0007669"/>
    <property type="project" value="UniProtKB-SubCell"/>
</dbReference>
<dbReference type="GO" id="GO:0016323">
    <property type="term" value="C:basolateral plasma membrane"/>
    <property type="evidence" value="ECO:0000250"/>
    <property type="project" value="UniProtKB"/>
</dbReference>
<dbReference type="GO" id="GO:0005768">
    <property type="term" value="C:endosome"/>
    <property type="evidence" value="ECO:0000250"/>
    <property type="project" value="UniProtKB"/>
</dbReference>
<dbReference type="GO" id="GO:0010008">
    <property type="term" value="C:endosome membrane"/>
    <property type="evidence" value="ECO:0007669"/>
    <property type="project" value="UniProtKB-SubCell"/>
</dbReference>
<dbReference type="GO" id="GO:0005886">
    <property type="term" value="C:plasma membrane"/>
    <property type="evidence" value="ECO:0000318"/>
    <property type="project" value="GO_Central"/>
</dbReference>
<dbReference type="GO" id="GO:0005542">
    <property type="term" value="F:folic acid binding"/>
    <property type="evidence" value="ECO:0007669"/>
    <property type="project" value="UniProtKB-KW"/>
</dbReference>
<dbReference type="GO" id="GO:0140211">
    <property type="term" value="F:folic acid:proton symporter activity"/>
    <property type="evidence" value="ECO:0000314"/>
    <property type="project" value="UniProtKB"/>
</dbReference>
<dbReference type="GO" id="GO:0015350">
    <property type="term" value="F:methotrexate transmembrane transporter activity"/>
    <property type="evidence" value="ECO:0000250"/>
    <property type="project" value="UniProtKB"/>
</dbReference>
<dbReference type="GO" id="GO:0022857">
    <property type="term" value="F:transmembrane transporter activity"/>
    <property type="evidence" value="ECO:0000318"/>
    <property type="project" value="GO_Central"/>
</dbReference>
<dbReference type="GO" id="GO:1904447">
    <property type="term" value="P:folate import across plasma membrane"/>
    <property type="evidence" value="ECO:0000314"/>
    <property type="project" value="UniProtKB"/>
</dbReference>
<dbReference type="GO" id="GO:0055085">
    <property type="term" value="P:transmembrane transport"/>
    <property type="evidence" value="ECO:0000318"/>
    <property type="project" value="GO_Central"/>
</dbReference>
<dbReference type="Gene3D" id="1.20.1250.20">
    <property type="entry name" value="MFS general substrate transporter like domains"/>
    <property type="match status" value="1"/>
</dbReference>
<dbReference type="InterPro" id="IPR011701">
    <property type="entry name" value="MFS"/>
</dbReference>
<dbReference type="InterPro" id="IPR036259">
    <property type="entry name" value="MFS_trans_sf"/>
</dbReference>
<dbReference type="PANTHER" id="PTHR23507:SF2">
    <property type="entry name" value="PROTON-COUPLED FOLATE TRANSPORTER"/>
    <property type="match status" value="1"/>
</dbReference>
<dbReference type="PANTHER" id="PTHR23507">
    <property type="entry name" value="ZGC:174356"/>
    <property type="match status" value="1"/>
</dbReference>
<dbReference type="Pfam" id="PF07690">
    <property type="entry name" value="MFS_1"/>
    <property type="match status" value="1"/>
</dbReference>
<dbReference type="SUPFAM" id="SSF103473">
    <property type="entry name" value="MFS general substrate transporter"/>
    <property type="match status" value="1"/>
</dbReference>
<gene>
    <name evidence="2" type="primary">SLC46A1</name>
    <name evidence="8" type="synonym">PCFT</name>
</gene>